<gene>
    <name type="primary">hupM</name>
</gene>
<reference key="1">
    <citation type="journal article" date="1994" name="J. Mol. Biol.">
        <title>Sequences, organization and analysis of the hupZMNOQRTV genes from the Azotobacter chroococcum hydrogenase gene cluster.</title>
        <authorList>
            <person name="Du L."/>
            <person name="Tibelius K.H."/>
            <person name="Souza E.M."/>
            <person name="Garg R.P."/>
            <person name="Yates M.G."/>
        </authorList>
    </citation>
    <scope>NUCLEOTIDE SEQUENCE [GENOMIC DNA]</scope>
</reference>
<organism>
    <name type="scientific">Azotobacter chroococcum mcd 1</name>
    <dbReference type="NCBI Taxonomy" id="355"/>
    <lineage>
        <taxon>Bacteria</taxon>
        <taxon>Pseudomonadati</taxon>
        <taxon>Pseudomonadota</taxon>
        <taxon>Gammaproteobacteria</taxon>
        <taxon>Pseudomonadales</taxon>
        <taxon>Pseudomonadaceae</taxon>
        <taxon>Azotobacter</taxon>
    </lineage>
</organism>
<feature type="chain" id="PRO_0000201936" description="Hydrogenase expression/formation protein HupM">
    <location>
        <begin position="1"/>
        <end position="209"/>
    </location>
</feature>
<feature type="binding site" evidence="1">
    <location>
        <position position="21"/>
    </location>
    <ligand>
        <name>Ni(2+)</name>
        <dbReference type="ChEBI" id="CHEBI:49786"/>
    </ligand>
</feature>
<feature type="binding site" evidence="1">
    <location>
        <position position="67"/>
    </location>
    <ligand>
        <name>Ni(2+)</name>
        <dbReference type="ChEBI" id="CHEBI:49786"/>
    </ligand>
</feature>
<feature type="binding site" evidence="1">
    <location>
        <position position="98"/>
    </location>
    <ligand>
        <name>Ni(2+)</name>
        <dbReference type="ChEBI" id="CHEBI:49786"/>
    </ligand>
</feature>
<proteinExistence type="inferred from homology"/>
<protein>
    <recommendedName>
        <fullName>Hydrogenase expression/formation protein HupM</fullName>
    </recommendedName>
</protein>
<evidence type="ECO:0000250" key="1"/>
<evidence type="ECO:0000305" key="2"/>
<comment type="function">
    <text>Not known. Could be involved in the processing of hydrogenase.</text>
</comment>
<comment type="similarity">
    <text evidence="2">Belongs to the peptidase A31 family.</text>
</comment>
<keyword id="KW-0064">Aspartyl protease</keyword>
<keyword id="KW-0378">Hydrolase</keyword>
<keyword id="KW-0479">Metal-binding</keyword>
<keyword id="KW-0533">Nickel</keyword>
<keyword id="KW-0645">Protease</keyword>
<dbReference type="EMBL" id="L25315">
    <property type="protein sequence ID" value="AAA64448.1"/>
    <property type="molecule type" value="Genomic_DNA"/>
</dbReference>
<dbReference type="PIR" id="S53657">
    <property type="entry name" value="S53657"/>
</dbReference>
<dbReference type="SMR" id="Q43954"/>
<dbReference type="MEROPS" id="A31.002"/>
<dbReference type="GO" id="GO:0004190">
    <property type="term" value="F:aspartic-type endopeptidase activity"/>
    <property type="evidence" value="ECO:0007669"/>
    <property type="project" value="UniProtKB-KW"/>
</dbReference>
<dbReference type="GO" id="GO:0008047">
    <property type="term" value="F:enzyme activator activity"/>
    <property type="evidence" value="ECO:0007669"/>
    <property type="project" value="InterPro"/>
</dbReference>
<dbReference type="GO" id="GO:0046872">
    <property type="term" value="F:metal ion binding"/>
    <property type="evidence" value="ECO:0007669"/>
    <property type="project" value="UniProtKB-KW"/>
</dbReference>
<dbReference type="GO" id="GO:0016485">
    <property type="term" value="P:protein processing"/>
    <property type="evidence" value="ECO:0007669"/>
    <property type="project" value="InterPro"/>
</dbReference>
<dbReference type="CDD" id="cd06062">
    <property type="entry name" value="H2MP_MemB-H2up"/>
    <property type="match status" value="1"/>
</dbReference>
<dbReference type="FunFam" id="3.40.50.1450:FF:000002">
    <property type="entry name" value="Hydrogenase 1 maturation protease"/>
    <property type="match status" value="1"/>
</dbReference>
<dbReference type="Gene3D" id="3.40.50.1450">
    <property type="entry name" value="HybD-like"/>
    <property type="match status" value="1"/>
</dbReference>
<dbReference type="InterPro" id="IPR004419">
    <property type="entry name" value="Pept_A31_hyd_express"/>
</dbReference>
<dbReference type="InterPro" id="IPR023430">
    <property type="entry name" value="Pept_HybD-like_dom_sf"/>
</dbReference>
<dbReference type="InterPro" id="IPR000671">
    <property type="entry name" value="Peptidase_A31"/>
</dbReference>
<dbReference type="NCBIfam" id="TIGR00140">
    <property type="entry name" value="hupD"/>
    <property type="match status" value="1"/>
</dbReference>
<dbReference type="NCBIfam" id="TIGR00072">
    <property type="entry name" value="hydrog_prot"/>
    <property type="match status" value="1"/>
</dbReference>
<dbReference type="PANTHER" id="PTHR30302">
    <property type="entry name" value="HYDROGENASE 1 MATURATION PROTEASE"/>
    <property type="match status" value="1"/>
</dbReference>
<dbReference type="PANTHER" id="PTHR30302:SF1">
    <property type="entry name" value="HYDROGENASE 2 MATURATION PROTEASE"/>
    <property type="match status" value="1"/>
</dbReference>
<dbReference type="Pfam" id="PF01750">
    <property type="entry name" value="HycI"/>
    <property type="match status" value="1"/>
</dbReference>
<dbReference type="PRINTS" id="PR00446">
    <property type="entry name" value="HYDRGNUPTAKE"/>
</dbReference>
<dbReference type="SUPFAM" id="SSF53163">
    <property type="entry name" value="HybD-like"/>
    <property type="match status" value="1"/>
</dbReference>
<accession>Q43954</accession>
<sequence length="209" mass="22833">MTGSSPNILILGIGNLLWADEGFGVRCVELLNERYRFPDGVRLMDGGTQGIYLVQHVQQADCLIVFDAVDYGLAPGTLKVVRDDEVPRFMGAKRMSLHQTGFQDVLALAAFTGAYPRELLLVGVQPAELEDFGGSLREPVRAQLEPALAIALAFLAERGVLATPREGDAEQLAPAQLALGRYEAERPAEELAYRHGDIRFIAQPGREDD</sequence>
<name>HUPM_AZOCH</name>